<gene>
    <name type="ORF">DDB_G0293730</name>
</gene>
<accession>Q54BH5</accession>
<proteinExistence type="predicted"/>
<organism>
    <name type="scientific">Dictyostelium discoideum</name>
    <name type="common">Social amoeba</name>
    <dbReference type="NCBI Taxonomy" id="44689"/>
    <lineage>
        <taxon>Eukaryota</taxon>
        <taxon>Amoebozoa</taxon>
        <taxon>Evosea</taxon>
        <taxon>Eumycetozoa</taxon>
        <taxon>Dictyostelia</taxon>
        <taxon>Dictyosteliales</taxon>
        <taxon>Dictyosteliaceae</taxon>
        <taxon>Dictyostelium</taxon>
    </lineage>
</organism>
<name>Y3730_DICDI</name>
<dbReference type="EMBL" id="AAFI02000218">
    <property type="protein sequence ID" value="EAL60677.2"/>
    <property type="molecule type" value="Genomic_DNA"/>
</dbReference>
<dbReference type="RefSeq" id="XP_629054.2">
    <property type="nucleotide sequence ID" value="XM_629052.2"/>
</dbReference>
<dbReference type="PaxDb" id="44689-DDB0304477"/>
<dbReference type="EnsemblProtists" id="EAL60677">
    <property type="protein sequence ID" value="EAL60677"/>
    <property type="gene ID" value="DDB_G0293730"/>
</dbReference>
<dbReference type="GeneID" id="8629344"/>
<dbReference type="KEGG" id="ddi:DDB_G0293730"/>
<dbReference type="dictyBase" id="DDB_G0293730"/>
<dbReference type="VEuPathDB" id="AmoebaDB:DDB_G0293730"/>
<dbReference type="eggNOG" id="KOG4306">
    <property type="taxonomic scope" value="Eukaryota"/>
</dbReference>
<dbReference type="HOGENOM" id="CLU_377877_0_0_1"/>
<dbReference type="InParanoid" id="Q54BH5"/>
<dbReference type="PRO" id="PR:Q54BH5"/>
<dbReference type="Proteomes" id="UP000002195">
    <property type="component" value="Chromosome 6"/>
</dbReference>
<dbReference type="GO" id="GO:0008081">
    <property type="term" value="F:phosphoric diester hydrolase activity"/>
    <property type="evidence" value="ECO:0000318"/>
    <property type="project" value="GO_Central"/>
</dbReference>
<dbReference type="GO" id="GO:0006629">
    <property type="term" value="P:lipid metabolic process"/>
    <property type="evidence" value="ECO:0007669"/>
    <property type="project" value="InterPro"/>
</dbReference>
<dbReference type="CDD" id="cd08616">
    <property type="entry name" value="PI-PLCXD1c"/>
    <property type="match status" value="1"/>
</dbReference>
<dbReference type="Gene3D" id="3.20.20.190">
    <property type="entry name" value="Phosphatidylinositol (PI) phosphodiesterase"/>
    <property type="match status" value="1"/>
</dbReference>
<dbReference type="InterPro" id="IPR051057">
    <property type="entry name" value="PI-PLC_domain"/>
</dbReference>
<dbReference type="InterPro" id="IPR017946">
    <property type="entry name" value="PLC-like_Pdiesterase_TIM-brl"/>
</dbReference>
<dbReference type="InterPro" id="IPR042158">
    <property type="entry name" value="PLCXD1/2/3"/>
</dbReference>
<dbReference type="InterPro" id="IPR000909">
    <property type="entry name" value="PLipase_C_PInositol-sp_X_dom"/>
</dbReference>
<dbReference type="PANTHER" id="PTHR13593">
    <property type="match status" value="1"/>
</dbReference>
<dbReference type="PANTHER" id="PTHR13593:SF113">
    <property type="entry name" value="SI:DKEY-266F7.9"/>
    <property type="match status" value="1"/>
</dbReference>
<dbReference type="Pfam" id="PF00388">
    <property type="entry name" value="PI-PLC-X"/>
    <property type="match status" value="1"/>
</dbReference>
<dbReference type="SUPFAM" id="SSF51695">
    <property type="entry name" value="PLC-like phosphodiesterases"/>
    <property type="match status" value="1"/>
</dbReference>
<feature type="chain" id="PRO_0000370856" description="PI-PLC X-box domain-containing protein DDB_G0293730">
    <location>
        <begin position="1"/>
        <end position="734"/>
    </location>
</feature>
<feature type="domain" description="PI-PLC X-box">
    <location>
        <begin position="440"/>
        <end position="604"/>
    </location>
</feature>
<feature type="coiled-coil region" evidence="1">
    <location>
        <begin position="8"/>
        <end position="70"/>
    </location>
</feature>
<evidence type="ECO:0000255" key="1"/>
<protein>
    <recommendedName>
        <fullName>PI-PLC X-box domain-containing protein DDB_G0293730</fullName>
    </recommendedName>
</protein>
<reference key="1">
    <citation type="journal article" date="2005" name="Nature">
        <title>The genome of the social amoeba Dictyostelium discoideum.</title>
        <authorList>
            <person name="Eichinger L."/>
            <person name="Pachebat J.A."/>
            <person name="Gloeckner G."/>
            <person name="Rajandream M.A."/>
            <person name="Sucgang R."/>
            <person name="Berriman M."/>
            <person name="Song J."/>
            <person name="Olsen R."/>
            <person name="Szafranski K."/>
            <person name="Xu Q."/>
            <person name="Tunggal B."/>
            <person name="Kummerfeld S."/>
            <person name="Madera M."/>
            <person name="Konfortov B.A."/>
            <person name="Rivero F."/>
            <person name="Bankier A.T."/>
            <person name="Lehmann R."/>
            <person name="Hamlin N."/>
            <person name="Davies R."/>
            <person name="Gaudet P."/>
            <person name="Fey P."/>
            <person name="Pilcher K."/>
            <person name="Chen G."/>
            <person name="Saunders D."/>
            <person name="Sodergren E.J."/>
            <person name="Davis P."/>
            <person name="Kerhornou A."/>
            <person name="Nie X."/>
            <person name="Hall N."/>
            <person name="Anjard C."/>
            <person name="Hemphill L."/>
            <person name="Bason N."/>
            <person name="Farbrother P."/>
            <person name="Desany B."/>
            <person name="Just E."/>
            <person name="Morio T."/>
            <person name="Rost R."/>
            <person name="Churcher C.M."/>
            <person name="Cooper J."/>
            <person name="Haydock S."/>
            <person name="van Driessche N."/>
            <person name="Cronin A."/>
            <person name="Goodhead I."/>
            <person name="Muzny D.M."/>
            <person name="Mourier T."/>
            <person name="Pain A."/>
            <person name="Lu M."/>
            <person name="Harper D."/>
            <person name="Lindsay R."/>
            <person name="Hauser H."/>
            <person name="James K.D."/>
            <person name="Quiles M."/>
            <person name="Madan Babu M."/>
            <person name="Saito T."/>
            <person name="Buchrieser C."/>
            <person name="Wardroper A."/>
            <person name="Felder M."/>
            <person name="Thangavelu M."/>
            <person name="Johnson D."/>
            <person name="Knights A."/>
            <person name="Loulseged H."/>
            <person name="Mungall K.L."/>
            <person name="Oliver K."/>
            <person name="Price C."/>
            <person name="Quail M.A."/>
            <person name="Urushihara H."/>
            <person name="Hernandez J."/>
            <person name="Rabbinowitsch E."/>
            <person name="Steffen D."/>
            <person name="Sanders M."/>
            <person name="Ma J."/>
            <person name="Kohara Y."/>
            <person name="Sharp S."/>
            <person name="Simmonds M.N."/>
            <person name="Spiegler S."/>
            <person name="Tivey A."/>
            <person name="Sugano S."/>
            <person name="White B."/>
            <person name="Walker D."/>
            <person name="Woodward J.R."/>
            <person name="Winckler T."/>
            <person name="Tanaka Y."/>
            <person name="Shaulsky G."/>
            <person name="Schleicher M."/>
            <person name="Weinstock G.M."/>
            <person name="Rosenthal A."/>
            <person name="Cox E.C."/>
            <person name="Chisholm R.L."/>
            <person name="Gibbs R.A."/>
            <person name="Loomis W.F."/>
            <person name="Platzer M."/>
            <person name="Kay R.R."/>
            <person name="Williams J.G."/>
            <person name="Dear P.H."/>
            <person name="Noegel A.A."/>
            <person name="Barrell B.G."/>
            <person name="Kuspa A."/>
        </authorList>
    </citation>
    <scope>NUCLEOTIDE SEQUENCE [LARGE SCALE GENOMIC DNA]</scope>
    <source>
        <strain>AX4</strain>
    </source>
</reference>
<sequence length="734" mass="84213">MEQKEFDIKNILLKIEKDKNETSKKIQEKYKDCTIEDLEKSLRIQNKKSEEITFISKKIEELNEKLIVEKYKPLLSSSNNSNEIENEISPKIKEILIKNSILKNENSAVSPSITTTDASASLSFGGKTIVLPSNQPTTLRKSDAPADTKHIKLEITNDNKINIIWQDAKNYQSKDWVALYNYKYAPPDGYVNNTWYWAGNKTSGKVETGVTYDANRTQQVRYYNYQNELISQYTVESQCWIDIHGDLGSGLQVNWPNYSTSGSNDIIAIHNSNFGEPKDLANSIEQCYANKNDGDWVSEIINCGLPYYAVYWSNIGGGNYIKQACSKPMTPVDRKLAIGEYYNGEDSYNTSVAAFYDSRANDDKDYIMVTLKEVDQPGTPGYNAKAANGIVLSSNHSSYNDTLYFWGTYCSFDNETGKFYIRQKSCALEYRKWITDNYSKLKDRKVRNLVLPGSHDSATYFINSLSPKSPDADHYKYPDYLLTPWSKTQTCSVYKQLCFGVRYFDLRVARLKDKLYIIHNFYSDSVKQVLKDILQYVSENVNEVIILHWSHLYLVDEDNKLLMKMIIEILGKFMSNSNKGPDVKVGDLAGTPIICIYDDLVNPLSNGGAGGNGKRPDIRDPRLWDPSCISSPYETSRYHSFESILKFLKSRINVPKRKVLHVCQAILTIEFSYEFFGHDLITWTVEHRNKFNEFFNDLETFASPTNIIMTDFVTFYPLSSYCIRRNTLEFNNSN</sequence>
<keyword id="KW-0175">Coiled coil</keyword>
<keyword id="KW-1185">Reference proteome</keyword>